<feature type="signal peptide" evidence="1">
    <location>
        <begin position="1"/>
        <end position="22"/>
    </location>
</feature>
<feature type="chain" id="PRO_0000030974" description="Ribonuclease S-6">
    <location>
        <begin position="23"/>
        <end position="215"/>
    </location>
</feature>
<feature type="active site" description="Proton donor" evidence="4 6">
    <location>
        <position position="53"/>
    </location>
</feature>
<feature type="active site" evidence="6">
    <location>
        <position position="109"/>
    </location>
</feature>
<feature type="active site" description="Proton acceptor" evidence="4 6">
    <location>
        <position position="113"/>
    </location>
</feature>
<feature type="binding site" evidence="3">
    <location>
        <position position="32"/>
    </location>
    <ligand>
        <name>RNA</name>
        <dbReference type="ChEBI" id="CHEBI:33697"/>
    </ligand>
    <ligandPart>
        <name>a 3'-terminal ribonucleotide 3'-phosphate residue</name>
        <dbReference type="ChEBI" id="CHEBI:83062"/>
    </ligandPart>
</feature>
<feature type="binding site" evidence="3">
    <location>
        <position position="53"/>
    </location>
    <ligand>
        <name>RNA</name>
        <dbReference type="ChEBI" id="CHEBI:33697"/>
    </ligand>
    <ligandPart>
        <name>a 3'-terminal ribonucleotide 3'-phosphate residue</name>
        <dbReference type="ChEBI" id="CHEBI:83062"/>
    </ligandPart>
</feature>
<feature type="binding site" evidence="3">
    <location>
        <begin position="91"/>
        <end position="92"/>
    </location>
    <ligand>
        <name>RNA</name>
        <dbReference type="ChEBI" id="CHEBI:33697"/>
    </ligand>
    <ligandPart>
        <name>a 3'-terminal ribonucleotide 3'-phosphate residue</name>
        <dbReference type="ChEBI" id="CHEBI:83062"/>
    </ligandPart>
</feature>
<feature type="binding site" evidence="3">
    <location>
        <position position="94"/>
    </location>
    <ligand>
        <name>RNA</name>
        <dbReference type="ChEBI" id="CHEBI:33697"/>
    </ligand>
    <ligandPart>
        <name>a 3'-terminal ribonucleotide 3'-phosphate residue</name>
        <dbReference type="ChEBI" id="CHEBI:83062"/>
    </ligandPart>
</feature>
<feature type="binding site" evidence="3">
    <location>
        <position position="105"/>
    </location>
    <ligand>
        <name>RNA</name>
        <dbReference type="ChEBI" id="CHEBI:33697"/>
    </ligand>
    <ligandPart>
        <name>a 3'-terminal ribonucleotide 3'-phosphate residue</name>
        <dbReference type="ChEBI" id="CHEBI:83062"/>
    </ligandPart>
</feature>
<feature type="binding site" evidence="3">
    <location>
        <begin position="108"/>
        <end position="109"/>
    </location>
    <ligand>
        <name>RNA</name>
        <dbReference type="ChEBI" id="CHEBI:33697"/>
    </ligand>
    <ligandPart>
        <name>a 3'-terminal ribonucleotide 3'-phosphate residue</name>
        <dbReference type="ChEBI" id="CHEBI:83062"/>
    </ligandPart>
</feature>
<feature type="binding site" evidence="3">
    <location>
        <begin position="112"/>
        <end position="113"/>
    </location>
    <ligand>
        <name>RNA</name>
        <dbReference type="ChEBI" id="CHEBI:33697"/>
    </ligand>
    <ligandPart>
        <name>a 3'-terminal ribonucleotide 3'-phosphate residue</name>
        <dbReference type="ChEBI" id="CHEBI:83062"/>
    </ligandPart>
</feature>
<feature type="glycosylation site" description="N-linked (GlcNAc...) asparagine" evidence="5">
    <location>
        <position position="49"/>
    </location>
</feature>
<feature type="glycosylation site" description="N-linked (GlcNAc...) asparagine" evidence="5">
    <location>
        <position position="59"/>
    </location>
</feature>
<feature type="glycosylation site" description="N-linked (GlcNAc...) asparagine" evidence="5">
    <location>
        <position position="160"/>
    </location>
</feature>
<feature type="glycosylation site" description="N-linked (GlcNAc...) asparagine" evidence="5">
    <location>
        <position position="172"/>
    </location>
</feature>
<feature type="disulfide bond" evidence="4">
    <location>
        <begin position="38"/>
        <end position="43"/>
    </location>
</feature>
<feature type="disulfide bond" evidence="2">
    <location>
        <begin position="67"/>
        <end position="116"/>
    </location>
</feature>
<feature type="disulfide bond" evidence="2">
    <location>
        <begin position="175"/>
        <end position="204"/>
    </location>
</feature>
<feature type="disulfide bond" evidence="3">
    <location>
        <begin position="187"/>
        <end position="198"/>
    </location>
</feature>
<feature type="sequence conflict" description="In Ref. 2; AAB40028." evidence="8" ref="2">
    <original>A</original>
    <variation>T</variation>
    <location>
        <position position="36"/>
    </location>
</feature>
<feature type="sequence conflict" description="In Ref. 2; AAB40028." evidence="8" ref="2">
    <original>F</original>
    <variation>E</variation>
    <location>
        <position position="183"/>
    </location>
</feature>
<protein>
    <recommendedName>
        <fullName>Ribonuclease S-6</fullName>
        <ecNumber evidence="7">4.6.1.19</ecNumber>
    </recommendedName>
    <alternativeName>
        <fullName>S6-RNase</fullName>
    </alternativeName>
    <alternativeName>
        <fullName>Stylar glycoprotein 6</fullName>
    </alternativeName>
</protein>
<evidence type="ECO:0000250" key="1"/>
<evidence type="ECO:0000250" key="2">
    <source>
        <dbReference type="UniProtKB" id="P08056"/>
    </source>
</evidence>
<evidence type="ECO:0000250" key="3">
    <source>
        <dbReference type="UniProtKB" id="P23540"/>
    </source>
</evidence>
<evidence type="ECO:0000250" key="4">
    <source>
        <dbReference type="UniProtKB" id="Q7SID5"/>
    </source>
</evidence>
<evidence type="ECO:0000255" key="5">
    <source>
        <dbReference type="PROSITE-ProRule" id="PRU00498"/>
    </source>
</evidence>
<evidence type="ECO:0000255" key="6">
    <source>
        <dbReference type="PROSITE-ProRule" id="PRU10045"/>
    </source>
</evidence>
<evidence type="ECO:0000255" key="7">
    <source>
        <dbReference type="PROSITE-ProRule" id="PRU10046"/>
    </source>
</evidence>
<evidence type="ECO:0000305" key="8"/>
<sequence>MFNLPLTSVFVIFLFALSPIYGAFEYMQLVLQWPTAFCHTTPCKNIPSNFTIHGLWPDNVSTTLNFCGKEDDYNIIMDGPEKNGLYVRWPDLIREKADCMKTQNFWRREYIKHGTCCSEIYNQVQYFRLAMALKDKFDLLTSLKNHGIIRGYKYTVQKINNTIKTVTKGYPNLSCTKGQELWFVGICFDSTAKNVIDCPNPKTCKTASNQGIMFP</sequence>
<reference key="1">
    <citation type="journal article" date="1989" name="Plant Cell">
        <title>Sequence variability of three alleles of the self-incompatibility gene of Nicotiana alata.</title>
        <authorList>
            <person name="Anderson M.A."/>
            <person name="McFadden G.I."/>
            <person name="Bernatzky R."/>
            <person name="Atkinson A."/>
            <person name="Orpin T."/>
            <person name="Dedman H."/>
            <person name="Tregear G."/>
            <person name="Fernley R."/>
            <person name="Clarke A.E."/>
        </authorList>
    </citation>
    <scope>NUCLEOTIDE SEQUENCE [GENOMIC DNA]</scope>
</reference>
<reference key="2">
    <citation type="journal article" date="1995" name="Plant Mol. Biol.">
        <title>The S-locus of Nicotiana alata: genomic organization and sequence analysis of two S-RNase alleles.</title>
        <authorList>
            <person name="Matton D.P."/>
            <person name="Mau S.L."/>
            <person name="Okamoto S."/>
            <person name="Clarke A.E."/>
            <person name="Newbigin E."/>
        </authorList>
    </citation>
    <scope>NUCLEOTIDE SEQUENCE [GENOMIC DNA]</scope>
</reference>
<reference key="3">
    <citation type="journal article" date="1993" name="Mol. Gen. Genet.">
        <title>Identification and characterization of stylar glycoproteins associated with self-incompatibility genes of Japanese pear, Pyrus serotina Rehd.</title>
        <authorList>
            <person name="Sassa H."/>
            <person name="Hirano H."/>
            <person name="Ikehashi H."/>
        </authorList>
    </citation>
    <scope>PROTEIN SEQUENCE OF 23-36</scope>
</reference>
<reference key="4">
    <citation type="journal article" date="1996" name="Glycobiology">
        <title>Structure of N-glycans on the S3- and S6-allele stylar self-incompatibility ribonucleases of Nicotiana alata.</title>
        <authorList>
            <person name="Oxley D."/>
            <person name="Munro S.L."/>
            <person name="Craik D.J."/>
            <person name="Bacic A."/>
        </authorList>
    </citation>
    <scope>STRUCTURE OF CARBOHYDRATES</scope>
</reference>
<dbReference type="EC" id="4.6.1.19" evidence="7"/>
<dbReference type="EMBL" id="U08861">
    <property type="protein sequence ID" value="AAB40028.1"/>
    <property type="molecule type" value="Genomic_DNA"/>
</dbReference>
<dbReference type="PIR" id="JQ1079">
    <property type="entry name" value="LNNTS6"/>
</dbReference>
<dbReference type="SMR" id="Q40379"/>
<dbReference type="GlyConnect" id="533">
    <property type="glycosylation" value="14 N-Linked glycans"/>
</dbReference>
<dbReference type="GO" id="GO:0005576">
    <property type="term" value="C:extracellular region"/>
    <property type="evidence" value="ECO:0007669"/>
    <property type="project" value="UniProtKB-SubCell"/>
</dbReference>
<dbReference type="GO" id="GO:0033897">
    <property type="term" value="F:ribonuclease T2 activity"/>
    <property type="evidence" value="ECO:0007669"/>
    <property type="project" value="UniProtKB-EC"/>
</dbReference>
<dbReference type="GO" id="GO:0003723">
    <property type="term" value="F:RNA binding"/>
    <property type="evidence" value="ECO:0007669"/>
    <property type="project" value="InterPro"/>
</dbReference>
<dbReference type="GO" id="GO:0006401">
    <property type="term" value="P:RNA catabolic process"/>
    <property type="evidence" value="ECO:0007669"/>
    <property type="project" value="TreeGrafter"/>
</dbReference>
<dbReference type="CDD" id="cd01061">
    <property type="entry name" value="RNase_T2_euk"/>
    <property type="match status" value="1"/>
</dbReference>
<dbReference type="Gene3D" id="3.90.730.10">
    <property type="entry name" value="Ribonuclease T2-like"/>
    <property type="match status" value="1"/>
</dbReference>
<dbReference type="InterPro" id="IPR033697">
    <property type="entry name" value="Ribonuclease_T2_eukaryotic"/>
</dbReference>
<dbReference type="InterPro" id="IPR001568">
    <property type="entry name" value="RNase_T2-like"/>
</dbReference>
<dbReference type="InterPro" id="IPR036430">
    <property type="entry name" value="RNase_T2-like_sf"/>
</dbReference>
<dbReference type="InterPro" id="IPR018188">
    <property type="entry name" value="RNase_T2_His_AS_1"/>
</dbReference>
<dbReference type="PANTHER" id="PTHR11240:SF81">
    <property type="entry name" value="RIBONUCLEASE S-2"/>
    <property type="match status" value="1"/>
</dbReference>
<dbReference type="PANTHER" id="PTHR11240">
    <property type="entry name" value="RIBONUCLEASE T2"/>
    <property type="match status" value="1"/>
</dbReference>
<dbReference type="Pfam" id="PF00445">
    <property type="entry name" value="Ribonuclease_T2"/>
    <property type="match status" value="1"/>
</dbReference>
<dbReference type="SUPFAM" id="SSF55895">
    <property type="entry name" value="Ribonuclease Rh-like"/>
    <property type="match status" value="1"/>
</dbReference>
<dbReference type="PROSITE" id="PS00530">
    <property type="entry name" value="RNASE_T2_1"/>
    <property type="match status" value="1"/>
</dbReference>
<comment type="function">
    <text>Self-incompatibility (SI) is the inherited ability of a flowering plant to prevent self-fertilization by discriminating between self and non-self pollen during pollination. In many species of the Solanaceae, self-incompatibility is controlled by the single, multiallelic locus S. This stylar glycoprotein is associated with expression of self-incompatibility in potato.</text>
</comment>
<comment type="catalytic activity">
    <reaction evidence="6">
        <text>a ribonucleotidyl-ribonucleotide-RNA + H2O = a 3'-end 3'-phospho-ribonucleotide-RNA + a 5'-end dephospho-ribonucleoside-RNA + H(+)</text>
        <dbReference type="Rhea" id="RHEA:68052"/>
        <dbReference type="Rhea" id="RHEA-COMP:10463"/>
        <dbReference type="Rhea" id="RHEA-COMP:13936"/>
        <dbReference type="Rhea" id="RHEA-COMP:17355"/>
        <dbReference type="ChEBI" id="CHEBI:15377"/>
        <dbReference type="ChEBI" id="CHEBI:15378"/>
        <dbReference type="ChEBI" id="CHEBI:83062"/>
        <dbReference type="ChEBI" id="CHEBI:138284"/>
        <dbReference type="ChEBI" id="CHEBI:173118"/>
        <dbReference type="EC" id="4.6.1.19"/>
    </reaction>
</comment>
<comment type="subcellular location">
    <subcellularLocation>
        <location>Secreted</location>
        <location>Extracellular space</location>
    </subcellularLocation>
</comment>
<comment type="similarity">
    <text evidence="8">Belongs to the RNase T2 family.</text>
</comment>
<accession>Q40379</accession>
<name>RNS6_NICAL</name>
<organism>
    <name type="scientific">Nicotiana alata</name>
    <name type="common">Winged tobacco</name>
    <name type="synonym">Persian tobacco</name>
    <dbReference type="NCBI Taxonomy" id="4087"/>
    <lineage>
        <taxon>Eukaryota</taxon>
        <taxon>Viridiplantae</taxon>
        <taxon>Streptophyta</taxon>
        <taxon>Embryophyta</taxon>
        <taxon>Tracheophyta</taxon>
        <taxon>Spermatophyta</taxon>
        <taxon>Magnoliopsida</taxon>
        <taxon>eudicotyledons</taxon>
        <taxon>Gunneridae</taxon>
        <taxon>Pentapetalae</taxon>
        <taxon>asterids</taxon>
        <taxon>lamiids</taxon>
        <taxon>Solanales</taxon>
        <taxon>Solanaceae</taxon>
        <taxon>Nicotianoideae</taxon>
        <taxon>Nicotianeae</taxon>
        <taxon>Nicotiana</taxon>
    </lineage>
</organism>
<proteinExistence type="evidence at protein level"/>
<keyword id="KW-0903">Direct protein sequencing</keyword>
<keyword id="KW-1015">Disulfide bond</keyword>
<keyword id="KW-0255">Endonuclease</keyword>
<keyword id="KW-0325">Glycoprotein</keyword>
<keyword id="KW-0378">Hydrolase</keyword>
<keyword id="KW-0456">Lyase</keyword>
<keyword id="KW-0540">Nuclease</keyword>
<keyword id="KW-0964">Secreted</keyword>
<keyword id="KW-0732">Signal</keyword>